<feature type="chain" id="PRO_1000082335" description="UDP-2,3-diacylglucosamine hydrolase">
    <location>
        <begin position="1"/>
        <end position="240"/>
    </location>
</feature>
<feature type="binding site" evidence="1">
    <location>
        <position position="8"/>
    </location>
    <ligand>
        <name>Mn(2+)</name>
        <dbReference type="ChEBI" id="CHEBI:29035"/>
        <label>1</label>
    </ligand>
</feature>
<feature type="binding site" evidence="1">
    <location>
        <position position="10"/>
    </location>
    <ligand>
        <name>Mn(2+)</name>
        <dbReference type="ChEBI" id="CHEBI:29035"/>
        <label>1</label>
    </ligand>
</feature>
<feature type="binding site" evidence="1">
    <location>
        <position position="41"/>
    </location>
    <ligand>
        <name>Mn(2+)</name>
        <dbReference type="ChEBI" id="CHEBI:29035"/>
        <label>1</label>
    </ligand>
</feature>
<feature type="binding site" evidence="1">
    <location>
        <position position="41"/>
    </location>
    <ligand>
        <name>Mn(2+)</name>
        <dbReference type="ChEBI" id="CHEBI:29035"/>
        <label>2</label>
    </ligand>
</feature>
<feature type="binding site" evidence="1">
    <location>
        <begin position="79"/>
        <end position="80"/>
    </location>
    <ligand>
        <name>substrate</name>
    </ligand>
</feature>
<feature type="binding site" evidence="1">
    <location>
        <position position="79"/>
    </location>
    <ligand>
        <name>Mn(2+)</name>
        <dbReference type="ChEBI" id="CHEBI:29035"/>
        <label>2</label>
    </ligand>
</feature>
<feature type="binding site" evidence="1">
    <location>
        <position position="114"/>
    </location>
    <ligand>
        <name>Mn(2+)</name>
        <dbReference type="ChEBI" id="CHEBI:29035"/>
        <label>2</label>
    </ligand>
</feature>
<feature type="binding site" evidence="1">
    <location>
        <position position="122"/>
    </location>
    <ligand>
        <name>substrate</name>
    </ligand>
</feature>
<feature type="binding site" evidence="1">
    <location>
        <position position="160"/>
    </location>
    <ligand>
        <name>substrate</name>
    </ligand>
</feature>
<feature type="binding site" evidence="1">
    <location>
        <position position="164"/>
    </location>
    <ligand>
        <name>substrate</name>
    </ligand>
</feature>
<feature type="binding site" evidence="1">
    <location>
        <position position="167"/>
    </location>
    <ligand>
        <name>substrate</name>
    </ligand>
</feature>
<feature type="binding site" evidence="1">
    <location>
        <position position="195"/>
    </location>
    <ligand>
        <name>Mn(2+)</name>
        <dbReference type="ChEBI" id="CHEBI:29035"/>
        <label>2</label>
    </ligand>
</feature>
<feature type="binding site" evidence="1">
    <location>
        <position position="195"/>
    </location>
    <ligand>
        <name>substrate</name>
    </ligand>
</feature>
<feature type="binding site" evidence="1">
    <location>
        <position position="197"/>
    </location>
    <ligand>
        <name>Mn(2+)</name>
        <dbReference type="ChEBI" id="CHEBI:29035"/>
        <label>1</label>
    </ligand>
</feature>
<protein>
    <recommendedName>
        <fullName evidence="1">UDP-2,3-diacylglucosamine hydrolase</fullName>
        <ecNumber evidence="1">3.6.1.54</ecNumber>
    </recommendedName>
    <alternativeName>
        <fullName evidence="1">UDP-2,3-diacylglucosamine diphosphatase</fullName>
    </alternativeName>
</protein>
<accession>B1IZ77</accession>
<organism>
    <name type="scientific">Escherichia coli (strain ATCC 8739 / DSM 1576 / NBRC 3972 / NCIMB 8545 / WDCM 00012 / Crooks)</name>
    <dbReference type="NCBI Taxonomy" id="481805"/>
    <lineage>
        <taxon>Bacteria</taxon>
        <taxon>Pseudomonadati</taxon>
        <taxon>Pseudomonadota</taxon>
        <taxon>Gammaproteobacteria</taxon>
        <taxon>Enterobacterales</taxon>
        <taxon>Enterobacteriaceae</taxon>
        <taxon>Escherichia</taxon>
    </lineage>
</organism>
<proteinExistence type="inferred from homology"/>
<gene>
    <name evidence="1" type="primary">lpxH</name>
    <name type="ordered locus">EcolC_3098</name>
</gene>
<name>LPXH_ECOLC</name>
<reference key="1">
    <citation type="submission" date="2008-02" db="EMBL/GenBank/DDBJ databases">
        <title>Complete sequence of Escherichia coli C str. ATCC 8739.</title>
        <authorList>
            <person name="Copeland A."/>
            <person name="Lucas S."/>
            <person name="Lapidus A."/>
            <person name="Glavina del Rio T."/>
            <person name="Dalin E."/>
            <person name="Tice H."/>
            <person name="Bruce D."/>
            <person name="Goodwin L."/>
            <person name="Pitluck S."/>
            <person name="Kiss H."/>
            <person name="Brettin T."/>
            <person name="Detter J.C."/>
            <person name="Han C."/>
            <person name="Kuske C.R."/>
            <person name="Schmutz J."/>
            <person name="Larimer F."/>
            <person name="Land M."/>
            <person name="Hauser L."/>
            <person name="Kyrpides N."/>
            <person name="Mikhailova N."/>
            <person name="Ingram L."/>
            <person name="Richardson P."/>
        </authorList>
    </citation>
    <scope>NUCLEOTIDE SEQUENCE [LARGE SCALE GENOMIC DNA]</scope>
    <source>
        <strain>ATCC 8739 / DSM 1576 / NBRC 3972 / NCIMB 8545 / WDCM 00012 / Crooks</strain>
    </source>
</reference>
<keyword id="KW-0997">Cell inner membrane</keyword>
<keyword id="KW-1003">Cell membrane</keyword>
<keyword id="KW-0378">Hydrolase</keyword>
<keyword id="KW-0441">Lipid A biosynthesis</keyword>
<keyword id="KW-0444">Lipid biosynthesis</keyword>
<keyword id="KW-0443">Lipid metabolism</keyword>
<keyword id="KW-0464">Manganese</keyword>
<keyword id="KW-0472">Membrane</keyword>
<keyword id="KW-0479">Metal-binding</keyword>
<dbReference type="EC" id="3.6.1.54" evidence="1"/>
<dbReference type="EMBL" id="CP000946">
    <property type="protein sequence ID" value="ACA78722.1"/>
    <property type="molecule type" value="Genomic_DNA"/>
</dbReference>
<dbReference type="RefSeq" id="WP_000212247.1">
    <property type="nucleotide sequence ID" value="NZ_MTFT01000020.1"/>
</dbReference>
<dbReference type="SMR" id="B1IZ77"/>
<dbReference type="KEGG" id="ecl:EcolC_3098"/>
<dbReference type="HOGENOM" id="CLU_074586_0_0_6"/>
<dbReference type="UniPathway" id="UPA00359">
    <property type="reaction ID" value="UER00480"/>
</dbReference>
<dbReference type="GO" id="GO:0005737">
    <property type="term" value="C:cytoplasm"/>
    <property type="evidence" value="ECO:0007669"/>
    <property type="project" value="InterPro"/>
</dbReference>
<dbReference type="GO" id="GO:0019897">
    <property type="term" value="C:extrinsic component of plasma membrane"/>
    <property type="evidence" value="ECO:0007669"/>
    <property type="project" value="UniProtKB-UniRule"/>
</dbReference>
<dbReference type="GO" id="GO:0030145">
    <property type="term" value="F:manganese ion binding"/>
    <property type="evidence" value="ECO:0007669"/>
    <property type="project" value="UniProtKB-UniRule"/>
</dbReference>
<dbReference type="GO" id="GO:0008758">
    <property type="term" value="F:UDP-2,3-diacylglucosamine hydrolase activity"/>
    <property type="evidence" value="ECO:0007669"/>
    <property type="project" value="UniProtKB-UniRule"/>
</dbReference>
<dbReference type="GO" id="GO:0009245">
    <property type="term" value="P:lipid A biosynthetic process"/>
    <property type="evidence" value="ECO:0007669"/>
    <property type="project" value="UniProtKB-UniRule"/>
</dbReference>
<dbReference type="CDD" id="cd07398">
    <property type="entry name" value="MPP_YbbF-LpxH"/>
    <property type="match status" value="1"/>
</dbReference>
<dbReference type="FunFam" id="3.60.21.10:FF:000012">
    <property type="entry name" value="UDP-2,3-diacylglucosamine hydrolase"/>
    <property type="match status" value="1"/>
</dbReference>
<dbReference type="Gene3D" id="3.60.21.10">
    <property type="match status" value="1"/>
</dbReference>
<dbReference type="HAMAP" id="MF_00575">
    <property type="entry name" value="LpxH"/>
    <property type="match status" value="1"/>
</dbReference>
<dbReference type="InterPro" id="IPR004843">
    <property type="entry name" value="Calcineurin-like_PHP_ApaH"/>
</dbReference>
<dbReference type="InterPro" id="IPR043461">
    <property type="entry name" value="LpxH-like"/>
</dbReference>
<dbReference type="InterPro" id="IPR029052">
    <property type="entry name" value="Metallo-depent_PP-like"/>
</dbReference>
<dbReference type="InterPro" id="IPR010138">
    <property type="entry name" value="UDP-diacylglucosamine_Hdrlase"/>
</dbReference>
<dbReference type="NCBIfam" id="TIGR01854">
    <property type="entry name" value="lipid_A_lpxH"/>
    <property type="match status" value="1"/>
</dbReference>
<dbReference type="NCBIfam" id="NF003743">
    <property type="entry name" value="PRK05340.1"/>
    <property type="match status" value="1"/>
</dbReference>
<dbReference type="PANTHER" id="PTHR34990:SF1">
    <property type="entry name" value="UDP-2,3-DIACYLGLUCOSAMINE HYDROLASE"/>
    <property type="match status" value="1"/>
</dbReference>
<dbReference type="PANTHER" id="PTHR34990">
    <property type="entry name" value="UDP-2,3-DIACYLGLUCOSAMINE HYDROLASE-RELATED"/>
    <property type="match status" value="1"/>
</dbReference>
<dbReference type="Pfam" id="PF00149">
    <property type="entry name" value="Metallophos"/>
    <property type="match status" value="1"/>
</dbReference>
<dbReference type="SUPFAM" id="SSF56300">
    <property type="entry name" value="Metallo-dependent phosphatases"/>
    <property type="match status" value="1"/>
</dbReference>
<sequence>MATLFIADLHLCVEEPAITAGFLRFLAGEARKADALYILGDLFEAWIGDDDPNPLHRKMAAAIKAVSDSGVPCYFIHGNRDFLLGKRFARESGMTLLPEEKVLELYGRRVLIMHGDTLCTDDAGYQAFRAKVHKPWLQTLFLALPLFVRKRIAARMRANSKEANSSKSLAIMDVNQNAVVSAMEKHQVQWLIHGHTHRPAVHELIANQQPAFRVVLGAWHTEGSMVKVTADDVELIHFPF</sequence>
<evidence type="ECO:0000255" key="1">
    <source>
        <dbReference type="HAMAP-Rule" id="MF_00575"/>
    </source>
</evidence>
<comment type="function">
    <text evidence="1">Hydrolyzes the pyrophosphate bond of UDP-2,3-diacylglucosamine to yield 2,3-diacylglucosamine 1-phosphate (lipid X) and UMP by catalyzing the attack of water at the alpha-P atom. Involved in the biosynthesis of lipid A, a phosphorylated glycolipid that anchors the lipopolysaccharide to the outer membrane of the cell.</text>
</comment>
<comment type="catalytic activity">
    <reaction evidence="1">
        <text>UDP-2-N,3-O-bis[(3R)-3-hydroxytetradecanoyl]-alpha-D-glucosamine + H2O = 2-N,3-O-bis[(3R)-3-hydroxytetradecanoyl]-alpha-D-glucosaminyl 1-phosphate + UMP + 2 H(+)</text>
        <dbReference type="Rhea" id="RHEA:25213"/>
        <dbReference type="ChEBI" id="CHEBI:15377"/>
        <dbReference type="ChEBI" id="CHEBI:15378"/>
        <dbReference type="ChEBI" id="CHEBI:57865"/>
        <dbReference type="ChEBI" id="CHEBI:57957"/>
        <dbReference type="ChEBI" id="CHEBI:78847"/>
        <dbReference type="EC" id="3.6.1.54"/>
    </reaction>
</comment>
<comment type="cofactor">
    <cofactor evidence="1">
        <name>Mn(2+)</name>
        <dbReference type="ChEBI" id="CHEBI:29035"/>
    </cofactor>
    <text evidence="1">Binds 2 Mn(2+) ions per subunit in a binuclear metal center.</text>
</comment>
<comment type="pathway">
    <text evidence="1">Glycolipid biosynthesis; lipid IV(A) biosynthesis; lipid IV(A) from (3R)-3-hydroxytetradecanoyl-[acyl-carrier-protein] and UDP-N-acetyl-alpha-D-glucosamine: step 4/6.</text>
</comment>
<comment type="subcellular location">
    <subcellularLocation>
        <location evidence="1">Cell inner membrane</location>
        <topology evidence="1">Peripheral membrane protein</topology>
        <orientation evidence="1">Cytoplasmic side</orientation>
    </subcellularLocation>
</comment>
<comment type="similarity">
    <text evidence="1">Belongs to the LpxH family.</text>
</comment>